<organism>
    <name type="scientific">Vibrio atlanticus (strain LGP32)</name>
    <name type="common">Vibrio splendidus (strain Mel32)</name>
    <dbReference type="NCBI Taxonomy" id="575788"/>
    <lineage>
        <taxon>Bacteria</taxon>
        <taxon>Pseudomonadati</taxon>
        <taxon>Pseudomonadota</taxon>
        <taxon>Gammaproteobacteria</taxon>
        <taxon>Vibrionales</taxon>
        <taxon>Vibrionaceae</taxon>
        <taxon>Vibrio</taxon>
    </lineage>
</organism>
<gene>
    <name evidence="1" type="primary">fis</name>
    <name type="ordered locus">VS_2948</name>
</gene>
<dbReference type="EMBL" id="FM954972">
    <property type="protein sequence ID" value="CAV20244.1"/>
    <property type="molecule type" value="Genomic_DNA"/>
</dbReference>
<dbReference type="SMR" id="B7VM54"/>
<dbReference type="STRING" id="575788.VS_2948"/>
<dbReference type="KEGG" id="vsp:VS_2948"/>
<dbReference type="eggNOG" id="COG2901">
    <property type="taxonomic scope" value="Bacteria"/>
</dbReference>
<dbReference type="HOGENOM" id="CLU_158040_3_0_6"/>
<dbReference type="Proteomes" id="UP000009100">
    <property type="component" value="Chromosome 1"/>
</dbReference>
<dbReference type="GO" id="GO:0003700">
    <property type="term" value="F:DNA-binding transcription factor activity"/>
    <property type="evidence" value="ECO:0007669"/>
    <property type="project" value="UniProtKB-UniRule"/>
</dbReference>
<dbReference type="GO" id="GO:0043565">
    <property type="term" value="F:sequence-specific DNA binding"/>
    <property type="evidence" value="ECO:0007669"/>
    <property type="project" value="InterPro"/>
</dbReference>
<dbReference type="FunFam" id="1.10.10.60:FF:000006">
    <property type="entry name" value="DNA-binding protein Fis"/>
    <property type="match status" value="1"/>
</dbReference>
<dbReference type="Gene3D" id="1.10.10.60">
    <property type="entry name" value="Homeodomain-like"/>
    <property type="match status" value="1"/>
</dbReference>
<dbReference type="HAMAP" id="MF_00166">
    <property type="entry name" value="DNA_binding_Fis"/>
    <property type="match status" value="1"/>
</dbReference>
<dbReference type="InterPro" id="IPR005412">
    <property type="entry name" value="Fis_DNA-bd"/>
</dbReference>
<dbReference type="InterPro" id="IPR009057">
    <property type="entry name" value="Homeodomain-like_sf"/>
</dbReference>
<dbReference type="InterPro" id="IPR002197">
    <property type="entry name" value="HTH_Fis"/>
</dbReference>
<dbReference type="InterPro" id="IPR050207">
    <property type="entry name" value="Trans_regulatory_Fis"/>
</dbReference>
<dbReference type="NCBIfam" id="NF001659">
    <property type="entry name" value="PRK00430.1"/>
    <property type="match status" value="1"/>
</dbReference>
<dbReference type="PANTHER" id="PTHR47918">
    <property type="entry name" value="DNA-BINDING PROTEIN FIS"/>
    <property type="match status" value="1"/>
</dbReference>
<dbReference type="PANTHER" id="PTHR47918:SF1">
    <property type="entry name" value="DNA-BINDING PROTEIN FIS"/>
    <property type="match status" value="1"/>
</dbReference>
<dbReference type="Pfam" id="PF02954">
    <property type="entry name" value="HTH_8"/>
    <property type="match status" value="1"/>
</dbReference>
<dbReference type="PIRSF" id="PIRSF002097">
    <property type="entry name" value="DNA-binding_Fis"/>
    <property type="match status" value="1"/>
</dbReference>
<dbReference type="PRINTS" id="PR01591">
    <property type="entry name" value="DNABINDNGFIS"/>
</dbReference>
<dbReference type="PRINTS" id="PR01590">
    <property type="entry name" value="HTHFIS"/>
</dbReference>
<dbReference type="SUPFAM" id="SSF46689">
    <property type="entry name" value="Homeodomain-like"/>
    <property type="match status" value="1"/>
</dbReference>
<feature type="chain" id="PRO_1000123612" description="DNA-binding protein Fis">
    <location>
        <begin position="1"/>
        <end position="98"/>
    </location>
</feature>
<feature type="DNA-binding region" description="H-T-H motif" evidence="1">
    <location>
        <begin position="74"/>
        <end position="93"/>
    </location>
</feature>
<comment type="function">
    <text evidence="1">Activates ribosomal RNA transcription. Plays a direct role in upstream activation of rRNA promoters.</text>
</comment>
<comment type="subunit">
    <text evidence="1">Homodimer.</text>
</comment>
<comment type="similarity">
    <text evidence="1">Belongs to the transcriptional regulatory Fis family.</text>
</comment>
<proteinExistence type="inferred from homology"/>
<name>FIS_VIBA3</name>
<reference key="1">
    <citation type="submission" date="2009-02" db="EMBL/GenBank/DDBJ databases">
        <title>Vibrio splendidus str. LGP32 complete genome.</title>
        <authorList>
            <person name="Mazel D."/>
            <person name="Le Roux F."/>
        </authorList>
    </citation>
    <scope>NUCLEOTIDE SEQUENCE [LARGE SCALE GENOMIC DNA]</scope>
    <source>
        <strain>LGP32</strain>
    </source>
</reference>
<evidence type="ECO:0000255" key="1">
    <source>
        <dbReference type="HAMAP-Rule" id="MF_00166"/>
    </source>
</evidence>
<keyword id="KW-0010">Activator</keyword>
<keyword id="KW-0238">DNA-binding</keyword>
<keyword id="KW-0804">Transcription</keyword>
<keyword id="KW-0805">Transcription regulation</keyword>
<sequence length="98" mass="11098">MFEQNLTSEALTVTTVTSQDQITQKPLRDSVKASLKNYLAQLNGQEVSELYELVLAEVEQPLLDTIMQYTRGNQTRAATMMGINRGTLRKKLKKYGMN</sequence>
<accession>B7VM54</accession>
<protein>
    <recommendedName>
        <fullName evidence="1">DNA-binding protein Fis</fullName>
    </recommendedName>
</protein>